<proteinExistence type="evidence at protein level"/>
<accession>Q9NUJ1</accession>
<accession>B7Z6A8</accession>
<accession>C9IZX5</accession>
<accession>D3DN63</accession>
<accession>Q8TCF9</accession>
<keyword id="KW-0025">Alternative splicing</keyword>
<keyword id="KW-0378">Hydrolase</keyword>
<keyword id="KW-0496">Mitochondrion</keyword>
<keyword id="KW-1267">Proteomics identification</keyword>
<keyword id="KW-1185">Reference proteome</keyword>
<keyword id="KW-0809">Transit peptide</keyword>
<evidence type="ECO:0000250" key="1">
    <source>
        <dbReference type="UniProtKB" id="Q8N2K0"/>
    </source>
</evidence>
<evidence type="ECO:0000255" key="2"/>
<evidence type="ECO:0000269" key="3">
    <source>
    </source>
</evidence>
<evidence type="ECO:0000269" key="4">
    <source>
    </source>
</evidence>
<evidence type="ECO:0000303" key="5">
    <source>
    </source>
</evidence>
<evidence type="ECO:0000303" key="6">
    <source>
    </source>
</evidence>
<evidence type="ECO:0000303" key="7">
    <source>
    </source>
</evidence>
<evidence type="ECO:0000305" key="8"/>
<evidence type="ECO:0000305" key="9">
    <source>
    </source>
</evidence>
<evidence type="ECO:0000305" key="10">
    <source>
    </source>
</evidence>
<evidence type="ECO:0000312" key="11">
    <source>
        <dbReference type="HGNC" id="HGNC:25656"/>
    </source>
</evidence>
<name>ABHDA_HUMAN</name>
<comment type="function">
    <text evidence="3 4">Acts as an acyl-protein thioesterase that hydrolyzes fatty acids from acylated residues in proteins (PubMed:31740833). Regulates the mitochondrial S-depalmitoylation of the nucleophilic active site residue of peroxiredoxin-5/PRDX5, a key antioxidant protein, therefore modulating mitochondrial antioxidant ability (PubMed:31740833). Also catalyzes the deglucuronidation of mycophenolic acid acyl-glucuronide, an active metabolite of the immunosuppressant drug mycophenolate (PubMed:22294686).</text>
</comment>
<comment type="catalytic activity">
    <reaction evidence="4">
        <text>S-hexadecanoyl-L-cysteinyl-[protein] + H2O = L-cysteinyl-[protein] + hexadecanoate + H(+)</text>
        <dbReference type="Rhea" id="RHEA:19233"/>
        <dbReference type="Rhea" id="RHEA-COMP:10131"/>
        <dbReference type="Rhea" id="RHEA-COMP:11032"/>
        <dbReference type="ChEBI" id="CHEBI:7896"/>
        <dbReference type="ChEBI" id="CHEBI:15377"/>
        <dbReference type="ChEBI" id="CHEBI:15378"/>
        <dbReference type="ChEBI" id="CHEBI:29950"/>
        <dbReference type="ChEBI" id="CHEBI:74151"/>
        <dbReference type="EC" id="3.1.2.22"/>
    </reaction>
    <physiologicalReaction direction="left-to-right" evidence="4">
        <dbReference type="Rhea" id="RHEA:19234"/>
    </physiologicalReaction>
</comment>
<comment type="catalytic activity">
    <reaction evidence="3">
        <text>mycophenolic acid O-acyl-beta-D-glucuronide + H2O = mycophenolate + D-glucuronate + H(+)</text>
        <dbReference type="Rhea" id="RHEA:34179"/>
        <dbReference type="ChEBI" id="CHEBI:15377"/>
        <dbReference type="ChEBI" id="CHEBI:15378"/>
        <dbReference type="ChEBI" id="CHEBI:58720"/>
        <dbReference type="ChEBI" id="CHEBI:62932"/>
        <dbReference type="ChEBI" id="CHEBI:66982"/>
        <dbReference type="EC" id="3.1.1.93"/>
    </reaction>
    <physiologicalReaction direction="left-to-right" evidence="9">
        <dbReference type="Rhea" id="RHEA:34180"/>
    </physiologicalReaction>
</comment>
<comment type="activity regulation">
    <text evidence="4">Inhibited by palmostatin-B.</text>
</comment>
<comment type="biophysicochemical properties">
    <kinetics>
        <KM evidence="3">100.7 uM for mycophenolic acid O-acyl-beta-D-glucuronide</KM>
        <Vmax evidence="3">47.6 nmol/min/mg enzyme with mycophenolic acid O-acyl-beta-D-glucuronide as substrate</Vmax>
    </kinetics>
</comment>
<comment type="interaction">
    <interactant intactId="EBI-2564608">
        <id>Q9NUJ1</id>
    </interactant>
    <interactant intactId="EBI-720457">
        <id>Q96EW2</id>
        <label>HSPBAP1</label>
    </interactant>
    <organismsDiffer>false</organismsDiffer>
    <experiments>2</experiments>
</comment>
<comment type="subcellular location">
    <subcellularLocation>
        <location evidence="4">Mitochondrion</location>
    </subcellularLocation>
</comment>
<comment type="alternative products">
    <event type="alternative splicing"/>
    <isoform>
        <id>Q9NUJ1-1</id>
        <name>1</name>
        <sequence type="displayed"/>
    </isoform>
    <isoform>
        <id>Q9NUJ1-2</id>
        <name>2</name>
        <sequence type="described" ref="VSP_056093"/>
    </isoform>
    <isoform>
        <id>Q9NUJ1-3</id>
        <name>3</name>
        <sequence type="described" ref="VSP_056742 VSP_056743"/>
    </isoform>
</comment>
<comment type="similarity">
    <text evidence="8">Belongs to the AB hydrolase superfamily.</text>
</comment>
<feature type="transit peptide" description="Mitochondrion" evidence="2">
    <location>
        <begin position="1"/>
        <end position="52"/>
    </location>
</feature>
<feature type="chain" id="PRO_0000280733" description="Palmitoyl-protein thioesterase ABHD10, mitochondrial">
    <location>
        <begin position="53"/>
        <end position="306"/>
    </location>
</feature>
<feature type="domain" description="AB hydrolase-1" evidence="2">
    <location>
        <begin position="78"/>
        <end position="178"/>
    </location>
</feature>
<feature type="active site" description="Charge relay system" evidence="10">
    <location>
        <position position="152"/>
    </location>
</feature>
<feature type="active site" description="Charge relay system" evidence="1">
    <location>
        <position position="249"/>
    </location>
</feature>
<feature type="active site" description="Charge relay system" evidence="1">
    <location>
        <position position="279"/>
    </location>
</feature>
<feature type="splice variant" id="VSP_056093" description="In isoform 2." evidence="5">
    <location>
        <begin position="1"/>
        <end position="157"/>
    </location>
</feature>
<feature type="splice variant" id="VSP_056742" description="In isoform 3." evidence="8">
    <original>LKKEVEMKGVWSM</original>
    <variation>DSGRKNYISLHSA</variation>
    <location>
        <begin position="193"/>
        <end position="205"/>
    </location>
</feature>
<feature type="splice variant" id="VSP_056743" description="In isoform 3." evidence="8">
    <location>
        <begin position="206"/>
        <end position="306"/>
    </location>
</feature>
<feature type="sequence variant" id="VAR_031194" description="In dbSNP:rs17429033.">
    <original>I</original>
    <variation>V</variation>
    <location>
        <position position="251"/>
    </location>
</feature>
<feature type="mutagenesis site" description="Loss of palmitoyl-(protein) hydrolase activity." evidence="4">
    <original>S</original>
    <variation>A</variation>
    <location>
        <position position="152"/>
    </location>
</feature>
<gene>
    <name evidence="11" type="primary">ABHD10</name>
</gene>
<organism>
    <name type="scientific">Homo sapiens</name>
    <name type="common">Human</name>
    <dbReference type="NCBI Taxonomy" id="9606"/>
    <lineage>
        <taxon>Eukaryota</taxon>
        <taxon>Metazoa</taxon>
        <taxon>Chordata</taxon>
        <taxon>Craniata</taxon>
        <taxon>Vertebrata</taxon>
        <taxon>Euteleostomi</taxon>
        <taxon>Mammalia</taxon>
        <taxon>Eutheria</taxon>
        <taxon>Euarchontoglires</taxon>
        <taxon>Primates</taxon>
        <taxon>Haplorrhini</taxon>
        <taxon>Catarrhini</taxon>
        <taxon>Hominidae</taxon>
        <taxon>Homo</taxon>
    </lineage>
</organism>
<dbReference type="EC" id="3.1.2.22" evidence="4"/>
<dbReference type="EC" id="3.1.1.93" evidence="3"/>
<dbReference type="EMBL" id="AK002204">
    <property type="protein sequence ID" value="BAA92133.1"/>
    <property type="molecule type" value="mRNA"/>
</dbReference>
<dbReference type="EMBL" id="AK300018">
    <property type="protein sequence ID" value="BAH13194.1"/>
    <property type="molecule type" value="mRNA"/>
</dbReference>
<dbReference type="EMBL" id="AC060225">
    <property type="status" value="NOT_ANNOTATED_CDS"/>
    <property type="molecule type" value="Genomic_DNA"/>
</dbReference>
<dbReference type="EMBL" id="CH471052">
    <property type="protein sequence ID" value="EAW79688.1"/>
    <property type="molecule type" value="Genomic_DNA"/>
</dbReference>
<dbReference type="EMBL" id="CH471052">
    <property type="protein sequence ID" value="EAW79689.1"/>
    <property type="molecule type" value="Genomic_DNA"/>
</dbReference>
<dbReference type="EMBL" id="BC014516">
    <property type="protein sequence ID" value="AAH14516.1"/>
    <property type="molecule type" value="mRNA"/>
</dbReference>
<dbReference type="EMBL" id="AL713726">
    <property type="protein sequence ID" value="CAD28516.2"/>
    <property type="molecule type" value="mRNA"/>
</dbReference>
<dbReference type="CCDS" id="CCDS2963.1">
    <molecule id="Q9NUJ1-1"/>
</dbReference>
<dbReference type="CCDS" id="CCDS63718.1">
    <molecule id="Q9NUJ1-3"/>
</dbReference>
<dbReference type="RefSeq" id="NP_001258998.1">
    <molecule id="Q9NUJ1-3"/>
    <property type="nucleotide sequence ID" value="NM_001272069.2"/>
</dbReference>
<dbReference type="RefSeq" id="NP_060864.1">
    <molecule id="Q9NUJ1-1"/>
    <property type="nucleotide sequence ID" value="NM_018394.4"/>
</dbReference>
<dbReference type="RefSeq" id="XP_011511262.1">
    <property type="nucleotide sequence ID" value="XM_011512960.2"/>
</dbReference>
<dbReference type="SMR" id="Q9NUJ1"/>
<dbReference type="BioGRID" id="120628">
    <property type="interactions" value="97"/>
</dbReference>
<dbReference type="DIP" id="DIP-56934N"/>
<dbReference type="FunCoup" id="Q9NUJ1">
    <property type="interactions" value="1434"/>
</dbReference>
<dbReference type="IntAct" id="Q9NUJ1">
    <property type="interactions" value="55"/>
</dbReference>
<dbReference type="MINT" id="Q9NUJ1"/>
<dbReference type="STRING" id="9606.ENSP00000273359"/>
<dbReference type="ESTHER" id="human-ABHD10">
    <property type="family name" value="ABHD10"/>
</dbReference>
<dbReference type="MEROPS" id="S09.062"/>
<dbReference type="GlyGen" id="Q9NUJ1">
    <property type="glycosylation" value="1 site, 1 O-linked glycan (1 site)"/>
</dbReference>
<dbReference type="iPTMnet" id="Q9NUJ1"/>
<dbReference type="PhosphoSitePlus" id="Q9NUJ1"/>
<dbReference type="SwissPalm" id="Q9NUJ1"/>
<dbReference type="BioMuta" id="ABHD10"/>
<dbReference type="DMDM" id="74734347"/>
<dbReference type="jPOST" id="Q9NUJ1"/>
<dbReference type="MassIVE" id="Q9NUJ1"/>
<dbReference type="PaxDb" id="9606-ENSP00000273359"/>
<dbReference type="PeptideAtlas" id="Q9NUJ1"/>
<dbReference type="ProteomicsDB" id="6765"/>
<dbReference type="ProteomicsDB" id="7863"/>
<dbReference type="ProteomicsDB" id="82676">
    <molecule id="Q9NUJ1-1"/>
</dbReference>
<dbReference type="Pumba" id="Q9NUJ1"/>
<dbReference type="Antibodypedia" id="32454">
    <property type="antibodies" value="74 antibodies from 20 providers"/>
</dbReference>
<dbReference type="DNASU" id="55347"/>
<dbReference type="Ensembl" id="ENST00000273359.8">
    <molecule id="Q9NUJ1-1"/>
    <property type="protein sequence ID" value="ENSP00000273359.3"/>
    <property type="gene ID" value="ENSG00000144827.9"/>
</dbReference>
<dbReference type="Ensembl" id="ENST00000494817.1">
    <molecule id="Q9NUJ1-3"/>
    <property type="protein sequence ID" value="ENSP00000418973.1"/>
    <property type="gene ID" value="ENSG00000144827.9"/>
</dbReference>
<dbReference type="GeneID" id="55347"/>
<dbReference type="KEGG" id="hsa:55347"/>
<dbReference type="MANE-Select" id="ENST00000273359.8">
    <property type="protein sequence ID" value="ENSP00000273359.3"/>
    <property type="RefSeq nucleotide sequence ID" value="NM_018394.4"/>
    <property type="RefSeq protein sequence ID" value="NP_060864.1"/>
</dbReference>
<dbReference type="UCSC" id="uc003dyk.6">
    <molecule id="Q9NUJ1-1"/>
    <property type="organism name" value="human"/>
</dbReference>
<dbReference type="AGR" id="HGNC:25656"/>
<dbReference type="CTD" id="55347"/>
<dbReference type="DisGeNET" id="55347"/>
<dbReference type="GeneCards" id="ABHD10"/>
<dbReference type="HGNC" id="HGNC:25656">
    <property type="gene designation" value="ABHD10"/>
</dbReference>
<dbReference type="HPA" id="ENSG00000144827">
    <property type="expression patterns" value="Low tissue specificity"/>
</dbReference>
<dbReference type="MIM" id="618756">
    <property type="type" value="gene"/>
</dbReference>
<dbReference type="neXtProt" id="NX_Q9NUJ1"/>
<dbReference type="OpenTargets" id="ENSG00000144827"/>
<dbReference type="PharmGKB" id="PA134978569"/>
<dbReference type="VEuPathDB" id="HostDB:ENSG00000144827"/>
<dbReference type="eggNOG" id="ENOG502QT21">
    <property type="taxonomic scope" value="Eukaryota"/>
</dbReference>
<dbReference type="GeneTree" id="ENSGT00390000017765"/>
<dbReference type="HOGENOM" id="CLU_066961_0_0_1"/>
<dbReference type="InParanoid" id="Q9NUJ1"/>
<dbReference type="OMA" id="TISRWLE"/>
<dbReference type="OrthoDB" id="408373at2759"/>
<dbReference type="PAN-GO" id="Q9NUJ1">
    <property type="GO annotations" value="4 GO annotations based on evolutionary models"/>
</dbReference>
<dbReference type="PhylomeDB" id="Q9NUJ1"/>
<dbReference type="TreeFam" id="TF329757"/>
<dbReference type="BioCyc" id="MetaCyc:ENSG00000144827-MONOMER"/>
<dbReference type="BRENDA" id="3.1.1.93">
    <property type="organism ID" value="2681"/>
</dbReference>
<dbReference type="PathwayCommons" id="Q9NUJ1"/>
<dbReference type="Reactome" id="R-HSA-156588">
    <property type="pathway name" value="Glucuronidation"/>
</dbReference>
<dbReference type="SignaLink" id="Q9NUJ1"/>
<dbReference type="BioGRID-ORCS" id="55347">
    <property type="hits" value="15 hits in 1157 CRISPR screens"/>
</dbReference>
<dbReference type="ChiTaRS" id="ABHD10">
    <property type="organism name" value="human"/>
</dbReference>
<dbReference type="GenomeRNAi" id="55347"/>
<dbReference type="Pharos" id="Q9NUJ1">
    <property type="development level" value="Tbio"/>
</dbReference>
<dbReference type="PRO" id="PR:Q9NUJ1"/>
<dbReference type="Proteomes" id="UP000005640">
    <property type="component" value="Chromosome 3"/>
</dbReference>
<dbReference type="RNAct" id="Q9NUJ1">
    <property type="molecule type" value="protein"/>
</dbReference>
<dbReference type="Bgee" id="ENSG00000144827">
    <property type="expression patterns" value="Expressed in nephron tubule and 202 other cell types or tissues"/>
</dbReference>
<dbReference type="ExpressionAtlas" id="Q9NUJ1">
    <property type="expression patterns" value="baseline and differential"/>
</dbReference>
<dbReference type="GO" id="GO:0005829">
    <property type="term" value="C:cytosol"/>
    <property type="evidence" value="ECO:0000314"/>
    <property type="project" value="BHF-UCL"/>
</dbReference>
<dbReference type="GO" id="GO:0005759">
    <property type="term" value="C:mitochondrial matrix"/>
    <property type="evidence" value="ECO:0000304"/>
    <property type="project" value="Reactome"/>
</dbReference>
<dbReference type="GO" id="GO:0005739">
    <property type="term" value="C:mitochondrion"/>
    <property type="evidence" value="ECO:0000314"/>
    <property type="project" value="UniProtKB"/>
</dbReference>
<dbReference type="GO" id="GO:0004553">
    <property type="term" value="F:hydrolase activity, hydrolyzing O-glycosyl compounds"/>
    <property type="evidence" value="ECO:0000314"/>
    <property type="project" value="BHF-UCL"/>
</dbReference>
<dbReference type="GO" id="GO:0102390">
    <property type="term" value="F:mycophenolic acid acyl-glucuronide esterase activity"/>
    <property type="evidence" value="ECO:0007669"/>
    <property type="project" value="UniProtKB-EC"/>
</dbReference>
<dbReference type="GO" id="GO:0008474">
    <property type="term" value="F:palmitoyl-(protein) hydrolase activity"/>
    <property type="evidence" value="ECO:0000314"/>
    <property type="project" value="UniProtKB"/>
</dbReference>
<dbReference type="GO" id="GO:0002084">
    <property type="term" value="P:protein depalmitoylation"/>
    <property type="evidence" value="ECO:0000314"/>
    <property type="project" value="UniProtKB"/>
</dbReference>
<dbReference type="GO" id="GO:0006805">
    <property type="term" value="P:xenobiotic metabolic process"/>
    <property type="evidence" value="ECO:0000314"/>
    <property type="project" value="BHF-UCL"/>
</dbReference>
<dbReference type="FunFam" id="3.40.50.1820:FF:000164">
    <property type="entry name" value="Mycophenolic acid acyl-glucuronide esterase, mitochondrial"/>
    <property type="match status" value="1"/>
</dbReference>
<dbReference type="Gene3D" id="3.40.50.1820">
    <property type="entry name" value="alpha/beta hydrolase"/>
    <property type="match status" value="1"/>
</dbReference>
<dbReference type="InterPro" id="IPR000073">
    <property type="entry name" value="AB_hydrolase_1"/>
</dbReference>
<dbReference type="InterPro" id="IPR029058">
    <property type="entry name" value="AB_hydrolase_fold"/>
</dbReference>
<dbReference type="InterPro" id="IPR052382">
    <property type="entry name" value="ABHD10_acyl-thioesterase"/>
</dbReference>
<dbReference type="PANTHER" id="PTHR16138">
    <property type="entry name" value="MYCOPHENOLIC ACID ACYL-GLUCURONIDE ESTERASE, MITOCHONDRIAL"/>
    <property type="match status" value="1"/>
</dbReference>
<dbReference type="PANTHER" id="PTHR16138:SF7">
    <property type="entry name" value="PALMITOYL-PROTEIN THIOESTERASE ABHD10, MITOCHONDRIAL"/>
    <property type="match status" value="1"/>
</dbReference>
<dbReference type="Pfam" id="PF00561">
    <property type="entry name" value="Abhydrolase_1"/>
    <property type="match status" value="1"/>
</dbReference>
<dbReference type="SUPFAM" id="SSF53474">
    <property type="entry name" value="alpha/beta-Hydrolases"/>
    <property type="match status" value="1"/>
</dbReference>
<sequence length="306" mass="33933">MAVARLAAVAAWVPCRSWGWAAVPFGPHRGLSVLLARIPQRAPRWLPACRQKTSLSFLNRPDLPNLAYKKLKGKSPGIIFIPGYLSYMNGTKALAIEEFCKSLGHACIRFDYSGVGSSDGNSEESTLGKWRKDVLSIIDDLADGPQILVGSSLGGWLMLHAAIARPEKVVALIGVATAADTLVTKFNQLPVELKKEVEMKGVWSMPSKYSEEGVYNVQYSFIKEAEHHCLLHSPIPVNCPIRLLHGMKDDIVPWHTSMQVADRVLSTDVDVILRKHSDHRMREKADIQLLVYTIDDLIDKLSTIVN</sequence>
<protein>
    <recommendedName>
        <fullName evidence="7">Palmitoyl-protein thioesterase ABHD10, mitochondrial</fullName>
        <ecNumber evidence="4">3.1.2.22</ecNumber>
    </recommendedName>
    <alternativeName>
        <fullName evidence="7">Acyl-protein thioesterase ABHD10</fullName>
    </alternativeName>
    <alternativeName>
        <fullName evidence="6">Alpha/beta hydrolase domain-containing protein 10</fullName>
        <shortName evidence="6">Abhydrolase domain-containing protein 10</shortName>
    </alternativeName>
    <alternativeName>
        <fullName evidence="6">Mycophenolic acid acyl-glucuronide esterase, mitochondrial</fullName>
        <ecNumber evidence="3">3.1.1.93</ecNumber>
    </alternativeName>
</protein>
<reference key="1">
    <citation type="journal article" date="2004" name="Nat. Genet.">
        <title>Complete sequencing and characterization of 21,243 full-length human cDNAs.</title>
        <authorList>
            <person name="Ota T."/>
            <person name="Suzuki Y."/>
            <person name="Nishikawa T."/>
            <person name="Otsuki T."/>
            <person name="Sugiyama T."/>
            <person name="Irie R."/>
            <person name="Wakamatsu A."/>
            <person name="Hayashi K."/>
            <person name="Sato H."/>
            <person name="Nagai K."/>
            <person name="Kimura K."/>
            <person name="Makita H."/>
            <person name="Sekine M."/>
            <person name="Obayashi M."/>
            <person name="Nishi T."/>
            <person name="Shibahara T."/>
            <person name="Tanaka T."/>
            <person name="Ishii S."/>
            <person name="Yamamoto J."/>
            <person name="Saito K."/>
            <person name="Kawai Y."/>
            <person name="Isono Y."/>
            <person name="Nakamura Y."/>
            <person name="Nagahari K."/>
            <person name="Murakami K."/>
            <person name="Yasuda T."/>
            <person name="Iwayanagi T."/>
            <person name="Wagatsuma M."/>
            <person name="Shiratori A."/>
            <person name="Sudo H."/>
            <person name="Hosoiri T."/>
            <person name="Kaku Y."/>
            <person name="Kodaira H."/>
            <person name="Kondo H."/>
            <person name="Sugawara M."/>
            <person name="Takahashi M."/>
            <person name="Kanda K."/>
            <person name="Yokoi T."/>
            <person name="Furuya T."/>
            <person name="Kikkawa E."/>
            <person name="Omura Y."/>
            <person name="Abe K."/>
            <person name="Kamihara K."/>
            <person name="Katsuta N."/>
            <person name="Sato K."/>
            <person name="Tanikawa M."/>
            <person name="Yamazaki M."/>
            <person name="Ninomiya K."/>
            <person name="Ishibashi T."/>
            <person name="Yamashita H."/>
            <person name="Murakawa K."/>
            <person name="Fujimori K."/>
            <person name="Tanai H."/>
            <person name="Kimata M."/>
            <person name="Watanabe M."/>
            <person name="Hiraoka S."/>
            <person name="Chiba Y."/>
            <person name="Ishida S."/>
            <person name="Ono Y."/>
            <person name="Takiguchi S."/>
            <person name="Watanabe S."/>
            <person name="Yosida M."/>
            <person name="Hotuta T."/>
            <person name="Kusano J."/>
            <person name="Kanehori K."/>
            <person name="Takahashi-Fujii A."/>
            <person name="Hara H."/>
            <person name="Tanase T.-O."/>
            <person name="Nomura Y."/>
            <person name="Togiya S."/>
            <person name="Komai F."/>
            <person name="Hara R."/>
            <person name="Takeuchi K."/>
            <person name="Arita M."/>
            <person name="Imose N."/>
            <person name="Musashino K."/>
            <person name="Yuuki H."/>
            <person name="Oshima A."/>
            <person name="Sasaki N."/>
            <person name="Aotsuka S."/>
            <person name="Yoshikawa Y."/>
            <person name="Matsunawa H."/>
            <person name="Ichihara T."/>
            <person name="Shiohata N."/>
            <person name="Sano S."/>
            <person name="Moriya S."/>
            <person name="Momiyama H."/>
            <person name="Satoh N."/>
            <person name="Takami S."/>
            <person name="Terashima Y."/>
            <person name="Suzuki O."/>
            <person name="Nakagawa S."/>
            <person name="Senoh A."/>
            <person name="Mizoguchi H."/>
            <person name="Goto Y."/>
            <person name="Shimizu F."/>
            <person name="Wakebe H."/>
            <person name="Hishigaki H."/>
            <person name="Watanabe T."/>
            <person name="Sugiyama A."/>
            <person name="Takemoto M."/>
            <person name="Kawakami B."/>
            <person name="Yamazaki M."/>
            <person name="Watanabe K."/>
            <person name="Kumagai A."/>
            <person name="Itakura S."/>
            <person name="Fukuzumi Y."/>
            <person name="Fujimori Y."/>
            <person name="Komiyama M."/>
            <person name="Tashiro H."/>
            <person name="Tanigami A."/>
            <person name="Fujiwara T."/>
            <person name="Ono T."/>
            <person name="Yamada K."/>
            <person name="Fujii Y."/>
            <person name="Ozaki K."/>
            <person name="Hirao M."/>
            <person name="Ohmori Y."/>
            <person name="Kawabata A."/>
            <person name="Hikiji T."/>
            <person name="Kobatake N."/>
            <person name="Inagaki H."/>
            <person name="Ikema Y."/>
            <person name="Okamoto S."/>
            <person name="Okitani R."/>
            <person name="Kawakami T."/>
            <person name="Noguchi S."/>
            <person name="Itoh T."/>
            <person name="Shigeta K."/>
            <person name="Senba T."/>
            <person name="Matsumura K."/>
            <person name="Nakajima Y."/>
            <person name="Mizuno T."/>
            <person name="Morinaga M."/>
            <person name="Sasaki M."/>
            <person name="Togashi T."/>
            <person name="Oyama M."/>
            <person name="Hata H."/>
            <person name="Watanabe M."/>
            <person name="Komatsu T."/>
            <person name="Mizushima-Sugano J."/>
            <person name="Satoh T."/>
            <person name="Shirai Y."/>
            <person name="Takahashi Y."/>
            <person name="Nakagawa K."/>
            <person name="Okumura K."/>
            <person name="Nagase T."/>
            <person name="Nomura N."/>
            <person name="Kikuchi H."/>
            <person name="Masuho Y."/>
            <person name="Yamashita R."/>
            <person name="Nakai K."/>
            <person name="Yada T."/>
            <person name="Nakamura Y."/>
            <person name="Ohara O."/>
            <person name="Isogai T."/>
            <person name="Sugano S."/>
        </authorList>
    </citation>
    <scope>NUCLEOTIDE SEQUENCE [LARGE SCALE MRNA] (ISOFORMS 1 AND 2)</scope>
    <source>
        <tissue>Placenta</tissue>
    </source>
</reference>
<reference key="2">
    <citation type="journal article" date="2006" name="Nature">
        <title>The DNA sequence, annotation and analysis of human chromosome 3.</title>
        <authorList>
            <person name="Muzny D.M."/>
            <person name="Scherer S.E."/>
            <person name="Kaul R."/>
            <person name="Wang J."/>
            <person name="Yu J."/>
            <person name="Sudbrak R."/>
            <person name="Buhay C.J."/>
            <person name="Chen R."/>
            <person name="Cree A."/>
            <person name="Ding Y."/>
            <person name="Dugan-Rocha S."/>
            <person name="Gill R."/>
            <person name="Gunaratne P."/>
            <person name="Harris R.A."/>
            <person name="Hawes A.C."/>
            <person name="Hernandez J."/>
            <person name="Hodgson A.V."/>
            <person name="Hume J."/>
            <person name="Jackson A."/>
            <person name="Khan Z.M."/>
            <person name="Kovar-Smith C."/>
            <person name="Lewis L.R."/>
            <person name="Lozado R.J."/>
            <person name="Metzker M.L."/>
            <person name="Milosavljevic A."/>
            <person name="Miner G.R."/>
            <person name="Morgan M.B."/>
            <person name="Nazareth L.V."/>
            <person name="Scott G."/>
            <person name="Sodergren E."/>
            <person name="Song X.-Z."/>
            <person name="Steffen D."/>
            <person name="Wei S."/>
            <person name="Wheeler D.A."/>
            <person name="Wright M.W."/>
            <person name="Worley K.C."/>
            <person name="Yuan Y."/>
            <person name="Zhang Z."/>
            <person name="Adams C.Q."/>
            <person name="Ansari-Lari M.A."/>
            <person name="Ayele M."/>
            <person name="Brown M.J."/>
            <person name="Chen G."/>
            <person name="Chen Z."/>
            <person name="Clendenning J."/>
            <person name="Clerc-Blankenburg K.P."/>
            <person name="Chen R."/>
            <person name="Chen Z."/>
            <person name="Davis C."/>
            <person name="Delgado O."/>
            <person name="Dinh H.H."/>
            <person name="Dong W."/>
            <person name="Draper H."/>
            <person name="Ernst S."/>
            <person name="Fu G."/>
            <person name="Gonzalez-Garay M.L."/>
            <person name="Garcia D.K."/>
            <person name="Gillett W."/>
            <person name="Gu J."/>
            <person name="Hao B."/>
            <person name="Haugen E."/>
            <person name="Havlak P."/>
            <person name="He X."/>
            <person name="Hennig S."/>
            <person name="Hu S."/>
            <person name="Huang W."/>
            <person name="Jackson L.R."/>
            <person name="Jacob L.S."/>
            <person name="Kelly S.H."/>
            <person name="Kube M."/>
            <person name="Levy R."/>
            <person name="Li Z."/>
            <person name="Liu B."/>
            <person name="Liu J."/>
            <person name="Liu W."/>
            <person name="Lu J."/>
            <person name="Maheshwari M."/>
            <person name="Nguyen B.-V."/>
            <person name="Okwuonu G.O."/>
            <person name="Palmeiri A."/>
            <person name="Pasternak S."/>
            <person name="Perez L.M."/>
            <person name="Phelps K.A."/>
            <person name="Plopper F.J."/>
            <person name="Qiang B."/>
            <person name="Raymond C."/>
            <person name="Rodriguez R."/>
            <person name="Saenphimmachak C."/>
            <person name="Santibanez J."/>
            <person name="Shen H."/>
            <person name="Shen Y."/>
            <person name="Subramanian S."/>
            <person name="Tabor P.E."/>
            <person name="Verduzco D."/>
            <person name="Waldron L."/>
            <person name="Wang J."/>
            <person name="Wang J."/>
            <person name="Wang Q."/>
            <person name="Williams G.A."/>
            <person name="Wong G.K.-S."/>
            <person name="Yao Z."/>
            <person name="Zhang J."/>
            <person name="Zhang X."/>
            <person name="Zhao G."/>
            <person name="Zhou J."/>
            <person name="Zhou Y."/>
            <person name="Nelson D."/>
            <person name="Lehrach H."/>
            <person name="Reinhardt R."/>
            <person name="Naylor S.L."/>
            <person name="Yang H."/>
            <person name="Olson M."/>
            <person name="Weinstock G."/>
            <person name="Gibbs R.A."/>
        </authorList>
    </citation>
    <scope>NUCLEOTIDE SEQUENCE [LARGE SCALE GENOMIC DNA]</scope>
</reference>
<reference key="3">
    <citation type="submission" date="2005-09" db="EMBL/GenBank/DDBJ databases">
        <authorList>
            <person name="Mural R.J."/>
            <person name="Istrail S."/>
            <person name="Sutton G.G."/>
            <person name="Florea L."/>
            <person name="Halpern A.L."/>
            <person name="Mobarry C.M."/>
            <person name="Lippert R."/>
            <person name="Walenz B."/>
            <person name="Shatkay H."/>
            <person name="Dew I."/>
            <person name="Miller J.R."/>
            <person name="Flanigan M.J."/>
            <person name="Edwards N.J."/>
            <person name="Bolanos R."/>
            <person name="Fasulo D."/>
            <person name="Halldorsson B.V."/>
            <person name="Hannenhalli S."/>
            <person name="Turner R."/>
            <person name="Yooseph S."/>
            <person name="Lu F."/>
            <person name="Nusskern D.R."/>
            <person name="Shue B.C."/>
            <person name="Zheng X.H."/>
            <person name="Zhong F."/>
            <person name="Delcher A.L."/>
            <person name="Huson D.H."/>
            <person name="Kravitz S.A."/>
            <person name="Mouchard L."/>
            <person name="Reinert K."/>
            <person name="Remington K.A."/>
            <person name="Clark A.G."/>
            <person name="Waterman M.S."/>
            <person name="Eichler E.E."/>
            <person name="Adams M.D."/>
            <person name="Hunkapiller M.W."/>
            <person name="Myers E.W."/>
            <person name="Venter J.C."/>
        </authorList>
    </citation>
    <scope>NUCLEOTIDE SEQUENCE [LARGE SCALE GENOMIC DNA]</scope>
</reference>
<reference key="4">
    <citation type="journal article" date="2004" name="Genome Res.">
        <title>The status, quality, and expansion of the NIH full-length cDNA project: the Mammalian Gene Collection (MGC).</title>
        <authorList>
            <consortium name="The MGC Project Team"/>
        </authorList>
    </citation>
    <scope>NUCLEOTIDE SEQUENCE [LARGE SCALE MRNA] (ISOFORM 1)</scope>
    <source>
        <tissue>Ovary</tissue>
    </source>
</reference>
<reference key="5">
    <citation type="journal article" date="2007" name="BMC Genomics">
        <title>The full-ORF clone resource of the German cDNA consortium.</title>
        <authorList>
            <person name="Bechtel S."/>
            <person name="Rosenfelder H."/>
            <person name="Duda A."/>
            <person name="Schmidt C.P."/>
            <person name="Ernst U."/>
            <person name="Wellenreuther R."/>
            <person name="Mehrle A."/>
            <person name="Schuster C."/>
            <person name="Bahr A."/>
            <person name="Bloecker H."/>
            <person name="Heubner D."/>
            <person name="Hoerlein A."/>
            <person name="Michel G."/>
            <person name="Wedler H."/>
            <person name="Koehrer K."/>
            <person name="Ottenwaelder B."/>
            <person name="Poustka A."/>
            <person name="Wiemann S."/>
            <person name="Schupp I."/>
        </authorList>
    </citation>
    <scope>NUCLEOTIDE SEQUENCE [LARGE SCALE MRNA] OF 73-306 (ISOFORM 1)</scope>
    <source>
        <tissue>Melanoma</tissue>
    </source>
</reference>
<reference key="6">
    <citation type="journal article" date="2011" name="BMC Syst. Biol.">
        <title>Initial characterization of the human central proteome.</title>
        <authorList>
            <person name="Burkard T.R."/>
            <person name="Planyavsky M."/>
            <person name="Kaupe I."/>
            <person name="Breitwieser F.P."/>
            <person name="Buerckstuemmer T."/>
            <person name="Bennett K.L."/>
            <person name="Superti-Furga G."/>
            <person name="Colinge J."/>
        </authorList>
    </citation>
    <scope>IDENTIFICATION BY MASS SPECTROMETRY [LARGE SCALE ANALYSIS]</scope>
</reference>
<reference key="7">
    <citation type="journal article" date="2012" name="J. Biol. Chem.">
        <title>Human alpha/beta hydrolase domain containing 10 (ABHD10) is responsible enzyme for deglucuronidation of mycophenolic acid acyl-glucuronide in liver.</title>
        <authorList>
            <person name="Iwamura A."/>
            <person name="Fukami T."/>
            <person name="Higuchi R."/>
            <person name="Nakajima M."/>
            <person name="Yokoi T."/>
        </authorList>
    </citation>
    <scope>FUNCTION</scope>
    <scope>CATALYTIC ACTIVITY</scope>
    <scope>BIOPHYSICOCHEMICAL PROPERTIES</scope>
    <source>
        <tissue>Liver</tissue>
    </source>
</reference>
<reference key="8">
    <citation type="journal article" date="2014" name="J. Proteomics">
        <title>An enzyme assisted RP-RPLC approach for in-depth analysis of human liver phosphoproteome.</title>
        <authorList>
            <person name="Bian Y."/>
            <person name="Song C."/>
            <person name="Cheng K."/>
            <person name="Dong M."/>
            <person name="Wang F."/>
            <person name="Huang J."/>
            <person name="Sun D."/>
            <person name="Wang L."/>
            <person name="Ye M."/>
            <person name="Zou H."/>
        </authorList>
    </citation>
    <scope>IDENTIFICATION BY MASS SPECTROMETRY [LARGE SCALE ANALYSIS]</scope>
    <source>
        <tissue>Liver</tissue>
    </source>
</reference>
<reference key="9">
    <citation type="journal article" date="2015" name="Proteomics">
        <title>N-terminome analysis of the human mitochondrial proteome.</title>
        <authorList>
            <person name="Vaca Jacome A.S."/>
            <person name="Rabilloud T."/>
            <person name="Schaeffer-Reiss C."/>
            <person name="Rompais M."/>
            <person name="Ayoub D."/>
            <person name="Lane L."/>
            <person name="Bairoch A."/>
            <person name="Van Dorsselaer A."/>
            <person name="Carapito C."/>
        </authorList>
    </citation>
    <scope>IDENTIFICATION BY MASS SPECTROMETRY [LARGE SCALE ANALYSIS]</scope>
</reference>
<reference key="10">
    <citation type="journal article" date="2019" name="Nat. Chem. Biol.">
        <title>ABHD10 is an S-depalmitoylase affecting redox homeostasis through peroxiredoxin-5.</title>
        <authorList>
            <person name="Cao Y."/>
            <person name="Qiu T."/>
            <person name="Kathayat R.S."/>
            <person name="Azizi S.A."/>
            <person name="Thorne A.K."/>
            <person name="Ahn D."/>
            <person name="Fukata Y."/>
            <person name="Fukata M."/>
            <person name="Rice P.A."/>
            <person name="Dickinson B.C."/>
        </authorList>
    </citation>
    <scope>FUNCTION</scope>
    <scope>CATALYTIC ACTIVITY</scope>
    <scope>ACTIVITY REGULATION</scope>
    <scope>SUBCELLULAR LOCATION</scope>
    <scope>MUTAGENESIS OF SER-152</scope>
    <scope>ACTIVE SITE</scope>
</reference>